<reference key="1">
    <citation type="submission" date="2008-06" db="EMBL/GenBank/DDBJ databases">
        <title>Complete sequence of Chlorobaculum parvum NCIB 8327.</title>
        <authorList>
            <consortium name="US DOE Joint Genome Institute"/>
            <person name="Lucas S."/>
            <person name="Copeland A."/>
            <person name="Lapidus A."/>
            <person name="Glavina del Rio T."/>
            <person name="Dalin E."/>
            <person name="Tice H."/>
            <person name="Bruce D."/>
            <person name="Goodwin L."/>
            <person name="Pitluck S."/>
            <person name="Schmutz J."/>
            <person name="Larimer F."/>
            <person name="Land M."/>
            <person name="Hauser L."/>
            <person name="Kyrpides N."/>
            <person name="Mikhailova N."/>
            <person name="Zhao F."/>
            <person name="Li T."/>
            <person name="Liu Z."/>
            <person name="Overmann J."/>
            <person name="Bryant D.A."/>
            <person name="Richardson P."/>
        </authorList>
    </citation>
    <scope>NUCLEOTIDE SEQUENCE [LARGE SCALE GENOMIC DNA]</scope>
    <source>
        <strain>DSM 263 / NCIMB 8327</strain>
    </source>
</reference>
<name>ATPG_CHLP8</name>
<dbReference type="EMBL" id="CP001099">
    <property type="protein sequence ID" value="ACF12300.1"/>
    <property type="molecule type" value="Genomic_DNA"/>
</dbReference>
<dbReference type="RefSeq" id="WP_012503133.1">
    <property type="nucleotide sequence ID" value="NC_011027.1"/>
</dbReference>
<dbReference type="SMR" id="B3QL62"/>
<dbReference type="STRING" id="517417.Cpar_1908"/>
<dbReference type="KEGG" id="cpc:Cpar_1908"/>
<dbReference type="eggNOG" id="COG0224">
    <property type="taxonomic scope" value="Bacteria"/>
</dbReference>
<dbReference type="HOGENOM" id="CLU_050669_0_1_10"/>
<dbReference type="OrthoDB" id="9812769at2"/>
<dbReference type="Proteomes" id="UP000008811">
    <property type="component" value="Chromosome"/>
</dbReference>
<dbReference type="GO" id="GO:0005886">
    <property type="term" value="C:plasma membrane"/>
    <property type="evidence" value="ECO:0007669"/>
    <property type="project" value="UniProtKB-SubCell"/>
</dbReference>
<dbReference type="GO" id="GO:0045259">
    <property type="term" value="C:proton-transporting ATP synthase complex"/>
    <property type="evidence" value="ECO:0007669"/>
    <property type="project" value="UniProtKB-KW"/>
</dbReference>
<dbReference type="GO" id="GO:0005524">
    <property type="term" value="F:ATP binding"/>
    <property type="evidence" value="ECO:0007669"/>
    <property type="project" value="UniProtKB-UniRule"/>
</dbReference>
<dbReference type="GO" id="GO:0046933">
    <property type="term" value="F:proton-transporting ATP synthase activity, rotational mechanism"/>
    <property type="evidence" value="ECO:0007669"/>
    <property type="project" value="UniProtKB-UniRule"/>
</dbReference>
<dbReference type="GO" id="GO:0042777">
    <property type="term" value="P:proton motive force-driven plasma membrane ATP synthesis"/>
    <property type="evidence" value="ECO:0007669"/>
    <property type="project" value="UniProtKB-UniRule"/>
</dbReference>
<dbReference type="CDD" id="cd12151">
    <property type="entry name" value="F1-ATPase_gamma"/>
    <property type="match status" value="1"/>
</dbReference>
<dbReference type="Gene3D" id="3.40.1380.10">
    <property type="match status" value="1"/>
</dbReference>
<dbReference type="Gene3D" id="1.10.287.80">
    <property type="entry name" value="ATP synthase, gamma subunit, helix hairpin domain"/>
    <property type="match status" value="2"/>
</dbReference>
<dbReference type="HAMAP" id="MF_00815">
    <property type="entry name" value="ATP_synth_gamma_bact"/>
    <property type="match status" value="1"/>
</dbReference>
<dbReference type="InterPro" id="IPR035968">
    <property type="entry name" value="ATP_synth_F1_ATPase_gsu"/>
</dbReference>
<dbReference type="InterPro" id="IPR000131">
    <property type="entry name" value="ATP_synth_F1_gsu"/>
</dbReference>
<dbReference type="InterPro" id="IPR023632">
    <property type="entry name" value="ATP_synth_F1_gsu_CS"/>
</dbReference>
<dbReference type="NCBIfam" id="TIGR01146">
    <property type="entry name" value="ATPsyn_F1gamma"/>
    <property type="match status" value="1"/>
</dbReference>
<dbReference type="NCBIfam" id="NF009958">
    <property type="entry name" value="PRK13425.1"/>
    <property type="match status" value="1"/>
</dbReference>
<dbReference type="PANTHER" id="PTHR11693">
    <property type="entry name" value="ATP SYNTHASE GAMMA CHAIN"/>
    <property type="match status" value="1"/>
</dbReference>
<dbReference type="PANTHER" id="PTHR11693:SF22">
    <property type="entry name" value="ATP SYNTHASE SUBUNIT GAMMA, MITOCHONDRIAL"/>
    <property type="match status" value="1"/>
</dbReference>
<dbReference type="Pfam" id="PF00231">
    <property type="entry name" value="ATP-synt"/>
    <property type="match status" value="1"/>
</dbReference>
<dbReference type="PRINTS" id="PR00126">
    <property type="entry name" value="ATPASEGAMMA"/>
</dbReference>
<dbReference type="SUPFAM" id="SSF52943">
    <property type="entry name" value="ATP synthase (F1-ATPase), gamma subunit"/>
    <property type="match status" value="1"/>
</dbReference>
<dbReference type="PROSITE" id="PS00153">
    <property type="entry name" value="ATPASE_GAMMA"/>
    <property type="match status" value="1"/>
</dbReference>
<comment type="function">
    <text evidence="1">Produces ATP from ADP in the presence of a proton gradient across the membrane. The gamma chain is believed to be important in regulating ATPase activity and the flow of protons through the CF(0) complex.</text>
</comment>
<comment type="subunit">
    <text evidence="1">F-type ATPases have 2 components, CF(1) - the catalytic core - and CF(0) - the membrane proton channel. CF(1) has five subunits: alpha(3), beta(3), gamma(1), delta(1), epsilon(1). CF(0) has three main subunits: a, b and c.</text>
</comment>
<comment type="subcellular location">
    <subcellularLocation>
        <location evidence="1">Cell inner membrane</location>
        <topology evidence="1">Peripheral membrane protein</topology>
    </subcellularLocation>
</comment>
<comment type="similarity">
    <text evidence="1">Belongs to the ATPase gamma chain family.</text>
</comment>
<evidence type="ECO:0000255" key="1">
    <source>
        <dbReference type="HAMAP-Rule" id="MF_00815"/>
    </source>
</evidence>
<feature type="chain" id="PRO_1000134123" description="ATP synthase gamma chain">
    <location>
        <begin position="1"/>
        <end position="292"/>
    </location>
</feature>
<sequence>MPTLKDIRIRLKGIKSTQQVTKAMKMVAAAKLRRAQDRAIQARPYAGKLKEMLASLSTKVDTSLNPLLSPREEVNKVLVVLVTSDRGLCGGFNANIMKLAQRVIHEDYAAQHAKGAVTMICAGTKGSDFFRKRGYNVTKAYPGVFQNLDFSSAKEIAELASQMYLKGEADKVILVYNEFKSVLAPNLRTEQLLPIAPEEGTEEAAGSEYLYEPSPEAIIDELVPKHLNTQVWRVMLESNAAEQAARMAAMDSATENAKELIRVLNISYNRARQAAITKELSEIVAGADALKQ</sequence>
<protein>
    <recommendedName>
        <fullName evidence="1">ATP synthase gamma chain</fullName>
    </recommendedName>
    <alternativeName>
        <fullName evidence="1">ATP synthase F1 sector gamma subunit</fullName>
    </alternativeName>
    <alternativeName>
        <fullName evidence="1">F-ATPase gamma subunit</fullName>
    </alternativeName>
</protein>
<keyword id="KW-0066">ATP synthesis</keyword>
<keyword id="KW-0997">Cell inner membrane</keyword>
<keyword id="KW-1003">Cell membrane</keyword>
<keyword id="KW-0139">CF(1)</keyword>
<keyword id="KW-0375">Hydrogen ion transport</keyword>
<keyword id="KW-0406">Ion transport</keyword>
<keyword id="KW-0472">Membrane</keyword>
<keyword id="KW-0813">Transport</keyword>
<accession>B3QL62</accession>
<proteinExistence type="inferred from homology"/>
<organism>
    <name type="scientific">Chlorobaculum parvum (strain DSM 263 / NCIMB 8327)</name>
    <name type="common">Chlorobium vibrioforme subsp. thiosulfatophilum</name>
    <dbReference type="NCBI Taxonomy" id="517417"/>
    <lineage>
        <taxon>Bacteria</taxon>
        <taxon>Pseudomonadati</taxon>
        <taxon>Chlorobiota</taxon>
        <taxon>Chlorobiia</taxon>
        <taxon>Chlorobiales</taxon>
        <taxon>Chlorobiaceae</taxon>
        <taxon>Chlorobaculum</taxon>
    </lineage>
</organism>
<gene>
    <name evidence="1" type="primary">atpG</name>
    <name type="ordered locus">Cpar_1908</name>
</gene>